<comment type="function">
    <text evidence="1">One of two assembly initiator proteins, it binds directly to the 5'-end of the 23S rRNA, where it nucleates assembly of the 50S subunit.</text>
</comment>
<comment type="function">
    <text evidence="1">One of the proteins that surrounds the polypeptide exit tunnel on the outside of the subunit.</text>
</comment>
<comment type="subunit">
    <text evidence="1">Part of the 50S ribosomal subunit.</text>
</comment>
<comment type="similarity">
    <text evidence="1">Belongs to the universal ribosomal protein uL24 family.</text>
</comment>
<accession>A3N368</accession>
<keyword id="KW-1185">Reference proteome</keyword>
<keyword id="KW-0687">Ribonucleoprotein</keyword>
<keyword id="KW-0689">Ribosomal protein</keyword>
<keyword id="KW-0694">RNA-binding</keyword>
<keyword id="KW-0699">rRNA-binding</keyword>
<evidence type="ECO:0000255" key="1">
    <source>
        <dbReference type="HAMAP-Rule" id="MF_01326"/>
    </source>
</evidence>
<evidence type="ECO:0000305" key="2"/>
<gene>
    <name evidence="1" type="primary">rplX</name>
    <name type="ordered locus">APL_1770</name>
</gene>
<reference key="1">
    <citation type="journal article" date="2008" name="J. Bacteriol.">
        <title>The complete genome sequence of Actinobacillus pleuropneumoniae L20 (serotype 5b).</title>
        <authorList>
            <person name="Foote S.J."/>
            <person name="Bosse J.T."/>
            <person name="Bouevitch A.B."/>
            <person name="Langford P.R."/>
            <person name="Young N.M."/>
            <person name="Nash J.H.E."/>
        </authorList>
    </citation>
    <scope>NUCLEOTIDE SEQUENCE [LARGE SCALE GENOMIC DNA]</scope>
    <source>
        <strain>L20</strain>
    </source>
</reference>
<dbReference type="EMBL" id="CP000569">
    <property type="protein sequence ID" value="ABN74854.1"/>
    <property type="molecule type" value="Genomic_DNA"/>
</dbReference>
<dbReference type="RefSeq" id="WP_005599300.1">
    <property type="nucleotide sequence ID" value="NC_009053.1"/>
</dbReference>
<dbReference type="SMR" id="A3N368"/>
<dbReference type="STRING" id="416269.APL_1770"/>
<dbReference type="EnsemblBacteria" id="ABN74854">
    <property type="protein sequence ID" value="ABN74854"/>
    <property type="gene ID" value="APL_1770"/>
</dbReference>
<dbReference type="GeneID" id="48600063"/>
<dbReference type="KEGG" id="apl:APL_1770"/>
<dbReference type="eggNOG" id="COG0198">
    <property type="taxonomic scope" value="Bacteria"/>
</dbReference>
<dbReference type="HOGENOM" id="CLU_093315_2_2_6"/>
<dbReference type="Proteomes" id="UP000001432">
    <property type="component" value="Chromosome"/>
</dbReference>
<dbReference type="GO" id="GO:1990904">
    <property type="term" value="C:ribonucleoprotein complex"/>
    <property type="evidence" value="ECO:0007669"/>
    <property type="project" value="UniProtKB-KW"/>
</dbReference>
<dbReference type="GO" id="GO:0005840">
    <property type="term" value="C:ribosome"/>
    <property type="evidence" value="ECO:0007669"/>
    <property type="project" value="UniProtKB-KW"/>
</dbReference>
<dbReference type="GO" id="GO:0019843">
    <property type="term" value="F:rRNA binding"/>
    <property type="evidence" value="ECO:0007669"/>
    <property type="project" value="UniProtKB-UniRule"/>
</dbReference>
<dbReference type="GO" id="GO:0003735">
    <property type="term" value="F:structural constituent of ribosome"/>
    <property type="evidence" value="ECO:0007669"/>
    <property type="project" value="InterPro"/>
</dbReference>
<dbReference type="GO" id="GO:0006412">
    <property type="term" value="P:translation"/>
    <property type="evidence" value="ECO:0007669"/>
    <property type="project" value="UniProtKB-UniRule"/>
</dbReference>
<dbReference type="CDD" id="cd06089">
    <property type="entry name" value="KOW_RPL26"/>
    <property type="match status" value="1"/>
</dbReference>
<dbReference type="FunFam" id="2.30.30.30:FF:000004">
    <property type="entry name" value="50S ribosomal protein L24"/>
    <property type="match status" value="1"/>
</dbReference>
<dbReference type="Gene3D" id="2.30.30.30">
    <property type="match status" value="1"/>
</dbReference>
<dbReference type="HAMAP" id="MF_01326_B">
    <property type="entry name" value="Ribosomal_uL24_B"/>
    <property type="match status" value="1"/>
</dbReference>
<dbReference type="InterPro" id="IPR005824">
    <property type="entry name" value="KOW"/>
</dbReference>
<dbReference type="InterPro" id="IPR014722">
    <property type="entry name" value="Rib_uL2_dom2"/>
</dbReference>
<dbReference type="InterPro" id="IPR003256">
    <property type="entry name" value="Ribosomal_uL24"/>
</dbReference>
<dbReference type="InterPro" id="IPR005825">
    <property type="entry name" value="Ribosomal_uL24_CS"/>
</dbReference>
<dbReference type="InterPro" id="IPR041988">
    <property type="entry name" value="Ribosomal_uL24_KOW"/>
</dbReference>
<dbReference type="InterPro" id="IPR008991">
    <property type="entry name" value="Translation_prot_SH3-like_sf"/>
</dbReference>
<dbReference type="NCBIfam" id="TIGR01079">
    <property type="entry name" value="rplX_bact"/>
    <property type="match status" value="1"/>
</dbReference>
<dbReference type="PANTHER" id="PTHR12903">
    <property type="entry name" value="MITOCHONDRIAL RIBOSOMAL PROTEIN L24"/>
    <property type="match status" value="1"/>
</dbReference>
<dbReference type="Pfam" id="PF00467">
    <property type="entry name" value="KOW"/>
    <property type="match status" value="1"/>
</dbReference>
<dbReference type="Pfam" id="PF17136">
    <property type="entry name" value="ribosomal_L24"/>
    <property type="match status" value="1"/>
</dbReference>
<dbReference type="SMART" id="SM00739">
    <property type="entry name" value="KOW"/>
    <property type="match status" value="1"/>
</dbReference>
<dbReference type="SUPFAM" id="SSF50104">
    <property type="entry name" value="Translation proteins SH3-like domain"/>
    <property type="match status" value="1"/>
</dbReference>
<dbReference type="PROSITE" id="PS01108">
    <property type="entry name" value="RIBOSOMAL_L24"/>
    <property type="match status" value="1"/>
</dbReference>
<sequence>MAAKIRQNDEVIVLTGKDKGKRGKVTQVLPNGKVIVEGVKIITKHEKPVPALGKAGGLVKKEAAIDASNIAIFNPKTNKADRVGFRFEDGKKVRFFKSNNEII</sequence>
<protein>
    <recommendedName>
        <fullName evidence="1">Large ribosomal subunit protein uL24</fullName>
    </recommendedName>
    <alternativeName>
        <fullName evidence="2">50S ribosomal protein L24</fullName>
    </alternativeName>
</protein>
<name>RL24_ACTP2</name>
<proteinExistence type="inferred from homology"/>
<organism>
    <name type="scientific">Actinobacillus pleuropneumoniae serotype 5b (strain L20)</name>
    <dbReference type="NCBI Taxonomy" id="416269"/>
    <lineage>
        <taxon>Bacteria</taxon>
        <taxon>Pseudomonadati</taxon>
        <taxon>Pseudomonadota</taxon>
        <taxon>Gammaproteobacteria</taxon>
        <taxon>Pasteurellales</taxon>
        <taxon>Pasteurellaceae</taxon>
        <taxon>Actinobacillus</taxon>
    </lineage>
</organism>
<feature type="chain" id="PRO_1000052173" description="Large ribosomal subunit protein uL24">
    <location>
        <begin position="1"/>
        <end position="103"/>
    </location>
</feature>